<feature type="chain" id="PRO_0000410102" description="GPN-loop GTPase 3">
    <location>
        <begin position="1"/>
        <end position="287"/>
    </location>
</feature>
<feature type="short sequence motif" description="Gly-Pro-Asn (GPN)-loop; involved in dimer interface" evidence="2">
    <location>
        <begin position="69"/>
        <end position="71"/>
    </location>
</feature>
<feature type="binding site" evidence="2">
    <location>
        <begin position="12"/>
        <end position="17"/>
    </location>
    <ligand>
        <name>GTP</name>
        <dbReference type="ChEBI" id="CHEBI:37565"/>
    </ligand>
</feature>
<feature type="binding site" evidence="2">
    <location>
        <begin position="172"/>
        <end position="175"/>
    </location>
    <ligand>
        <name>GTP</name>
        <dbReference type="ChEBI" id="CHEBI:37565"/>
    </ligand>
</feature>
<feature type="site" description="Stabilizes the phosphate intermediate; shared with dimeric partner" evidence="2">
    <location>
        <position position="71"/>
    </location>
</feature>
<keyword id="KW-0342">GTP-binding</keyword>
<keyword id="KW-0378">Hydrolase</keyword>
<keyword id="KW-0547">Nucleotide-binding</keyword>
<protein>
    <recommendedName>
        <fullName evidence="1">GPN-loop GTPase 3</fullName>
    </recommendedName>
</protein>
<gene>
    <name type="ordered locus">CNBB1090</name>
</gene>
<accession>P0CN95</accession>
<accession>Q55YA6</accession>
<accession>Q5KLN2</accession>
<evidence type="ECO:0000250" key="1">
    <source>
        <dbReference type="UniProtKB" id="Q06543"/>
    </source>
</evidence>
<evidence type="ECO:0000250" key="2">
    <source>
        <dbReference type="UniProtKB" id="Q9UYR9"/>
    </source>
</evidence>
<evidence type="ECO:0000305" key="3"/>
<proteinExistence type="inferred from homology"/>
<sequence>MRYAVLVTGPAGAGKSTFCASLITHAQTIGRSVHLVNLDPAADKFEYEPTIDIRDLINLEDVMEELEFGPNGGLIYCFEYLLNNLDWLEDELGAYEDDYLIIDCPGQIELYTHVPLLPRLATFLSTSLNFRTSAVYLIDSQFMQDKSKFFAGVMSAMSCMLSLGISMLCLMSKMDLVKDKKGRTKREVGRYLDPDPNLLLEDINQGTNSKFNQLNRAVVSLIEDQNIVSFLPLDVTSEDSVNTVLSHIDNMMQYGEDEEPKVPKDMDDGEFVAPPRSYNIKLIVRDR</sequence>
<reference key="1">
    <citation type="journal article" date="2005" name="Science">
        <title>The genome of the basidiomycetous yeast and human pathogen Cryptococcus neoformans.</title>
        <authorList>
            <person name="Loftus B.J."/>
            <person name="Fung E."/>
            <person name="Roncaglia P."/>
            <person name="Rowley D."/>
            <person name="Amedeo P."/>
            <person name="Bruno D."/>
            <person name="Vamathevan J."/>
            <person name="Miranda M."/>
            <person name="Anderson I.J."/>
            <person name="Fraser J.A."/>
            <person name="Allen J.E."/>
            <person name="Bosdet I.E."/>
            <person name="Brent M.R."/>
            <person name="Chiu R."/>
            <person name="Doering T.L."/>
            <person name="Donlin M.J."/>
            <person name="D'Souza C.A."/>
            <person name="Fox D.S."/>
            <person name="Grinberg V."/>
            <person name="Fu J."/>
            <person name="Fukushima M."/>
            <person name="Haas B.J."/>
            <person name="Huang J.C."/>
            <person name="Janbon G."/>
            <person name="Jones S.J.M."/>
            <person name="Koo H.L."/>
            <person name="Krzywinski M.I."/>
            <person name="Kwon-Chung K.J."/>
            <person name="Lengeler K.B."/>
            <person name="Maiti R."/>
            <person name="Marra M.A."/>
            <person name="Marra R.E."/>
            <person name="Mathewson C.A."/>
            <person name="Mitchell T.G."/>
            <person name="Pertea M."/>
            <person name="Riggs F.R."/>
            <person name="Salzberg S.L."/>
            <person name="Schein J.E."/>
            <person name="Shvartsbeyn A."/>
            <person name="Shin H."/>
            <person name="Shumway M."/>
            <person name="Specht C.A."/>
            <person name="Suh B.B."/>
            <person name="Tenney A."/>
            <person name="Utterback T.R."/>
            <person name="Wickes B.L."/>
            <person name="Wortman J.R."/>
            <person name="Wye N.H."/>
            <person name="Kronstad J.W."/>
            <person name="Lodge J.K."/>
            <person name="Heitman J."/>
            <person name="Davis R.W."/>
            <person name="Fraser C.M."/>
            <person name="Hyman R.W."/>
        </authorList>
    </citation>
    <scope>NUCLEOTIDE SEQUENCE [LARGE SCALE GENOMIC DNA]</scope>
    <source>
        <strain>B-3501A</strain>
    </source>
</reference>
<name>GPN3_CRYNB</name>
<comment type="function">
    <text evidence="1">Small GTPase required for proper nuclear import of RNA polymerase II and III (RNAPII and RNAPIII). May act at an RNAP assembly step prior to nuclear import.</text>
</comment>
<comment type="subunit">
    <text evidence="1">Heterodimers with GPN1 or GPN2. Binds to RNA polymerase II (RNAPII).</text>
</comment>
<comment type="similarity">
    <text evidence="3">Belongs to the GPN-loop GTPase family.</text>
</comment>
<organism>
    <name type="scientific">Cryptococcus neoformans var. neoformans serotype D (strain B-3501A)</name>
    <name type="common">Filobasidiella neoformans</name>
    <dbReference type="NCBI Taxonomy" id="283643"/>
    <lineage>
        <taxon>Eukaryota</taxon>
        <taxon>Fungi</taxon>
        <taxon>Dikarya</taxon>
        <taxon>Basidiomycota</taxon>
        <taxon>Agaricomycotina</taxon>
        <taxon>Tremellomycetes</taxon>
        <taxon>Tremellales</taxon>
        <taxon>Cryptococcaceae</taxon>
        <taxon>Cryptococcus</taxon>
        <taxon>Cryptococcus neoformans species complex</taxon>
    </lineage>
</organism>
<dbReference type="EMBL" id="AAEY01000007">
    <property type="protein sequence ID" value="EAL22660.1"/>
    <property type="molecule type" value="Genomic_DNA"/>
</dbReference>
<dbReference type="RefSeq" id="XP_777307.1">
    <property type="nucleotide sequence ID" value="XM_772214.1"/>
</dbReference>
<dbReference type="SMR" id="P0CN95"/>
<dbReference type="GeneID" id="4934199"/>
<dbReference type="KEGG" id="cnb:CNBB1090"/>
<dbReference type="VEuPathDB" id="FungiDB:CNBB1090"/>
<dbReference type="HOGENOM" id="CLU_037460_0_0_1"/>
<dbReference type="OrthoDB" id="2438at5206"/>
<dbReference type="GO" id="GO:0005525">
    <property type="term" value="F:GTP binding"/>
    <property type="evidence" value="ECO:0007669"/>
    <property type="project" value="UniProtKB-KW"/>
</dbReference>
<dbReference type="GO" id="GO:0003924">
    <property type="term" value="F:GTPase activity"/>
    <property type="evidence" value="ECO:0007669"/>
    <property type="project" value="TreeGrafter"/>
</dbReference>
<dbReference type="GO" id="GO:0007064">
    <property type="term" value="P:mitotic sister chromatid cohesion"/>
    <property type="evidence" value="ECO:0007669"/>
    <property type="project" value="EnsemblFungi"/>
</dbReference>
<dbReference type="GO" id="GO:0006606">
    <property type="term" value="P:protein import into nucleus"/>
    <property type="evidence" value="ECO:0007669"/>
    <property type="project" value="EnsemblFungi"/>
</dbReference>
<dbReference type="CDD" id="cd17872">
    <property type="entry name" value="GPN3"/>
    <property type="match status" value="1"/>
</dbReference>
<dbReference type="FunFam" id="3.40.50.300:FF:000552">
    <property type="entry name" value="GPN-loop GTPase 3"/>
    <property type="match status" value="1"/>
</dbReference>
<dbReference type="Gene3D" id="3.40.50.300">
    <property type="entry name" value="P-loop containing nucleotide triphosphate hydrolases"/>
    <property type="match status" value="1"/>
</dbReference>
<dbReference type="InterPro" id="IPR004130">
    <property type="entry name" value="Gpn"/>
</dbReference>
<dbReference type="InterPro" id="IPR030228">
    <property type="entry name" value="Gpn3"/>
</dbReference>
<dbReference type="InterPro" id="IPR027417">
    <property type="entry name" value="P-loop_NTPase"/>
</dbReference>
<dbReference type="PANTHER" id="PTHR21231:SF7">
    <property type="entry name" value="GPN-LOOP GTPASE 3"/>
    <property type="match status" value="1"/>
</dbReference>
<dbReference type="PANTHER" id="PTHR21231">
    <property type="entry name" value="XPA-BINDING PROTEIN 1-RELATED"/>
    <property type="match status" value="1"/>
</dbReference>
<dbReference type="Pfam" id="PF03029">
    <property type="entry name" value="ATP_bind_1"/>
    <property type="match status" value="1"/>
</dbReference>
<dbReference type="SUPFAM" id="SSF52540">
    <property type="entry name" value="P-loop containing nucleoside triphosphate hydrolases"/>
    <property type="match status" value="1"/>
</dbReference>